<evidence type="ECO:0000250" key="1"/>
<evidence type="ECO:0000255" key="2"/>
<evidence type="ECO:0000305" key="3"/>
<accession>Q6CTT7</accession>
<gene>
    <name type="primary">FYV4</name>
    <name type="ordered locus">KLLA0C10164g</name>
</gene>
<reference key="1">
    <citation type="journal article" date="2004" name="Nature">
        <title>Genome evolution in yeasts.</title>
        <authorList>
            <person name="Dujon B."/>
            <person name="Sherman D."/>
            <person name="Fischer G."/>
            <person name="Durrens P."/>
            <person name="Casaregola S."/>
            <person name="Lafontaine I."/>
            <person name="de Montigny J."/>
            <person name="Marck C."/>
            <person name="Neuveglise C."/>
            <person name="Talla E."/>
            <person name="Goffard N."/>
            <person name="Frangeul L."/>
            <person name="Aigle M."/>
            <person name="Anthouard V."/>
            <person name="Babour A."/>
            <person name="Barbe V."/>
            <person name="Barnay S."/>
            <person name="Blanchin S."/>
            <person name="Beckerich J.-M."/>
            <person name="Beyne E."/>
            <person name="Bleykasten C."/>
            <person name="Boisrame A."/>
            <person name="Boyer J."/>
            <person name="Cattolico L."/>
            <person name="Confanioleri F."/>
            <person name="de Daruvar A."/>
            <person name="Despons L."/>
            <person name="Fabre E."/>
            <person name="Fairhead C."/>
            <person name="Ferry-Dumazet H."/>
            <person name="Groppi A."/>
            <person name="Hantraye F."/>
            <person name="Hennequin C."/>
            <person name="Jauniaux N."/>
            <person name="Joyet P."/>
            <person name="Kachouri R."/>
            <person name="Kerrest A."/>
            <person name="Koszul R."/>
            <person name="Lemaire M."/>
            <person name="Lesur I."/>
            <person name="Ma L."/>
            <person name="Muller H."/>
            <person name="Nicaud J.-M."/>
            <person name="Nikolski M."/>
            <person name="Oztas S."/>
            <person name="Ozier-Kalogeropoulos O."/>
            <person name="Pellenz S."/>
            <person name="Potier S."/>
            <person name="Richard G.-F."/>
            <person name="Straub M.-L."/>
            <person name="Suleau A."/>
            <person name="Swennen D."/>
            <person name="Tekaia F."/>
            <person name="Wesolowski-Louvel M."/>
            <person name="Westhof E."/>
            <person name="Wirth B."/>
            <person name="Zeniou-Meyer M."/>
            <person name="Zivanovic Y."/>
            <person name="Bolotin-Fukuhara M."/>
            <person name="Thierry A."/>
            <person name="Bouchier C."/>
            <person name="Caudron B."/>
            <person name="Scarpelli C."/>
            <person name="Gaillardin C."/>
            <person name="Weissenbach J."/>
            <person name="Wincker P."/>
            <person name="Souciet J.-L."/>
        </authorList>
    </citation>
    <scope>NUCLEOTIDE SEQUENCE [LARGE SCALE GENOMIC DNA]</scope>
    <source>
        <strain>ATCC 8585 / CBS 2359 / DSM 70799 / NBRC 1267 / NRRL Y-1140 / WM37</strain>
    </source>
</reference>
<proteinExistence type="inferred from homology"/>
<dbReference type="EMBL" id="CR382123">
    <property type="protein sequence ID" value="CAH01503.1"/>
    <property type="molecule type" value="Genomic_DNA"/>
</dbReference>
<dbReference type="RefSeq" id="XP_452652.1">
    <property type="nucleotide sequence ID" value="XM_452652.1"/>
</dbReference>
<dbReference type="SMR" id="Q6CTT7"/>
<dbReference type="FunCoup" id="Q6CTT7">
    <property type="interactions" value="154"/>
</dbReference>
<dbReference type="STRING" id="284590.Q6CTT7"/>
<dbReference type="PaxDb" id="284590-Q6CTT7"/>
<dbReference type="KEGG" id="kla:KLLA0_C10164g"/>
<dbReference type="eggNOG" id="ENOG502SCMV">
    <property type="taxonomic scope" value="Eukaryota"/>
</dbReference>
<dbReference type="HOGENOM" id="CLU_126121_2_0_1"/>
<dbReference type="InParanoid" id="Q6CTT7"/>
<dbReference type="OMA" id="FENKWEN"/>
<dbReference type="Proteomes" id="UP000000598">
    <property type="component" value="Chromosome C"/>
</dbReference>
<dbReference type="GO" id="GO:0005739">
    <property type="term" value="C:mitochondrion"/>
    <property type="evidence" value="ECO:0007669"/>
    <property type="project" value="UniProtKB-SubCell"/>
</dbReference>
<dbReference type="GO" id="GO:1990904">
    <property type="term" value="C:ribonucleoprotein complex"/>
    <property type="evidence" value="ECO:0007669"/>
    <property type="project" value="UniProtKB-KW"/>
</dbReference>
<dbReference type="GO" id="GO:0005840">
    <property type="term" value="C:ribosome"/>
    <property type="evidence" value="ECO:0007669"/>
    <property type="project" value="UniProtKB-KW"/>
</dbReference>
<dbReference type="InterPro" id="IPR039603">
    <property type="entry name" value="Ribosomal_mS41"/>
</dbReference>
<dbReference type="InterPro" id="IPR019083">
    <property type="entry name" value="SAM_Ribosomal_mS41"/>
</dbReference>
<dbReference type="PANTHER" id="PTHR28235">
    <property type="entry name" value="PROTEIN FYV4, MITOCHONDRIAL"/>
    <property type="match status" value="1"/>
</dbReference>
<dbReference type="PANTHER" id="PTHR28235:SF1">
    <property type="entry name" value="SMALL RIBOSOMAL SUBUNIT PROTEIN MS41"/>
    <property type="match status" value="1"/>
</dbReference>
<dbReference type="Pfam" id="PF09597">
    <property type="entry name" value="SAM_Ribosomal_mS41"/>
    <property type="match status" value="1"/>
</dbReference>
<dbReference type="SMART" id="SM01238">
    <property type="entry name" value="IGR"/>
    <property type="match status" value="1"/>
</dbReference>
<protein>
    <recommendedName>
        <fullName evidence="3">Small ribosomal subunit protein mS41</fullName>
    </recommendedName>
    <alternativeName>
        <fullName>Protein FYV4, mitochondrial</fullName>
    </alternativeName>
</protein>
<keyword id="KW-0496">Mitochondrion</keyword>
<keyword id="KW-1185">Reference proteome</keyword>
<keyword id="KW-0687">Ribonucleoprotein</keyword>
<keyword id="KW-0689">Ribosomal protein</keyword>
<keyword id="KW-0809">Transit peptide</keyword>
<name>FYV4_KLULA</name>
<feature type="transit peptide" description="Mitochondrion" evidence="2">
    <location>
        <begin position="1"/>
        <end position="23"/>
    </location>
</feature>
<feature type="chain" id="PRO_0000292472" description="Small ribosomal subunit protein mS41">
    <location>
        <begin position="24"/>
        <end position="125"/>
    </location>
</feature>
<organism>
    <name type="scientific">Kluyveromyces lactis (strain ATCC 8585 / CBS 2359 / DSM 70799 / NBRC 1267 / NRRL Y-1140 / WM37)</name>
    <name type="common">Yeast</name>
    <name type="synonym">Candida sphaerica</name>
    <dbReference type="NCBI Taxonomy" id="284590"/>
    <lineage>
        <taxon>Eukaryota</taxon>
        <taxon>Fungi</taxon>
        <taxon>Dikarya</taxon>
        <taxon>Ascomycota</taxon>
        <taxon>Saccharomycotina</taxon>
        <taxon>Saccharomycetes</taxon>
        <taxon>Saccharomycetales</taxon>
        <taxon>Saccharomycetaceae</taxon>
        <taxon>Kluyveromyces</taxon>
    </lineage>
</organism>
<comment type="function">
    <text evidence="1">Involved in telomere length regulation.</text>
</comment>
<comment type="subcellular location">
    <subcellularLocation>
        <location evidence="1">Mitochondrion</location>
    </subcellularLocation>
</comment>
<comment type="similarity">
    <text evidence="3">Belongs to the mitochondrion-specific ribosomal protein mS41 family.</text>
</comment>
<sequence>MLFRRLFSSSVIVQAASKTSLRKTVKPSEEIPDVNAFLGRIGRKCDEFTDTYENKWDNLFTWGGPVLKEKGIPIQQRRYILNQVEKLRKGEEIKEIKKGKKSFFGGERKRKETIAKWRAEQRNAE</sequence>